<comment type="function">
    <text evidence="1">Severs microtubules, probably in an ATP-dependent fashion.</text>
</comment>
<comment type="catalytic activity">
    <reaction>
        <text>n ATP + n H2O + a microtubule = n ADP + n phosphate + (n+1) alpha/beta tubulin heterodimers.</text>
        <dbReference type="EC" id="5.6.1.1"/>
    </reaction>
</comment>
<comment type="subunit">
    <text evidence="1">Homohexamer. The homohexamer is stabilized by ATP-binding. The homohexamer may adopt a ring conformation through which microtubules pass prior to being severed. Interacts with microtubules (By similarity).</text>
</comment>
<comment type="subcellular location">
    <subcellularLocation>
        <location evidence="1">Cytoplasm</location>
        <location evidence="1">Cytoskeleton</location>
    </subcellularLocation>
    <subcellularLocation>
        <location evidence="1">Cytoplasm</location>
        <location evidence="1">Perinuclear region</location>
    </subcellularLocation>
    <text evidence="1">Localized to the perinuclear region of the cytoplasm in early embryos. Present in the cytoskeletal fraction.</text>
</comment>
<comment type="similarity">
    <text evidence="4">Belongs to the AAA ATPase family. Spastin subfamily.</text>
</comment>
<comment type="caution">
    <text evidence="4">Lacks the conserved MIT domain, which is one of the features of the spastin family.</text>
</comment>
<accession>A8XV40</accession>
<keyword id="KW-0067">ATP-binding</keyword>
<keyword id="KW-0175">Coiled coil</keyword>
<keyword id="KW-0963">Cytoplasm</keyword>
<keyword id="KW-0206">Cytoskeleton</keyword>
<keyword id="KW-0413">Isomerase</keyword>
<keyword id="KW-0493">Microtubule</keyword>
<keyword id="KW-0547">Nucleotide-binding</keyword>
<keyword id="KW-1185">Reference proteome</keyword>
<sequence>MFAFSKAPAGCSTYERVTQKFQDGSNKLRAAIEMDELTKQNGTINEKLQTAELYKQARQMLKEANEFNIMDIPESKRSEVREKREKTLNLEKSAQDRLIKICNEVDPNMKRASTAADPCRAARITPRNTRATVPGDKKVSKVKQTEKAPHVCSRGDRCGAHQPPPEKKSTPLKPVNQIRTRVKENKNPIGVQQQVFSFILSCCMRRNCRRPHYLFPCMISLKMNYFKFQATLPNQLNTVNRSNLLKGVDKAIGERLLDEILDSTGVRMDDVAGCHSAKATLEEAVILPALNPNLFSGLRQPVKGILLFGPPGNGKTLLAKAVAGESKQMFFNISASSLTSKWVGDSEKTIRGLFQIARNGQPSIIFIDEIDSILCERSEKDAEVSRRMKTEFLVQFDGATSSPDDRILVIGATNRPYELDDAVLRRFPKRIMLNLPDTEARKELITNTLKKHDMMDGLSSSDIRYIASNTSGFSNSDLVALCKEAAMVPVREIHRSKLSVTDGDKIRKIRASDFDTALRTIRPSTSDRILSKLSDFSRNFGC</sequence>
<proteinExistence type="inferred from homology"/>
<organism>
    <name type="scientific">Caenorhabditis briggsae</name>
    <dbReference type="NCBI Taxonomy" id="6238"/>
    <lineage>
        <taxon>Eukaryota</taxon>
        <taxon>Metazoa</taxon>
        <taxon>Ecdysozoa</taxon>
        <taxon>Nematoda</taxon>
        <taxon>Chromadorea</taxon>
        <taxon>Rhabditida</taxon>
        <taxon>Rhabditina</taxon>
        <taxon>Rhabditomorpha</taxon>
        <taxon>Rhabditoidea</taxon>
        <taxon>Rhabditidae</taxon>
        <taxon>Peloderinae</taxon>
        <taxon>Caenorhabditis</taxon>
    </lineage>
</organism>
<protein>
    <recommendedName>
        <fullName>Probable spastin homolog spas-1</fullName>
        <ecNumber>5.6.1.1</ecNumber>
    </recommendedName>
</protein>
<dbReference type="EC" id="5.6.1.1"/>
<dbReference type="EMBL" id="HE601047">
    <property type="protein sequence ID" value="CAP36507.2"/>
    <property type="molecule type" value="Genomic_DNA"/>
</dbReference>
<dbReference type="SMR" id="A8XV40"/>
<dbReference type="FunCoup" id="A8XV40">
    <property type="interactions" value="1550"/>
</dbReference>
<dbReference type="STRING" id="6238.A8XV40"/>
<dbReference type="WormBase" id="CBG19220a">
    <property type="protein sequence ID" value="CBP39759"/>
    <property type="gene ID" value="WBGene00038478"/>
    <property type="gene designation" value="Cbr-spas-1"/>
</dbReference>
<dbReference type="eggNOG" id="KOG0740">
    <property type="taxonomic scope" value="Eukaryota"/>
</dbReference>
<dbReference type="HOGENOM" id="CLU_000688_21_12_1"/>
<dbReference type="InParanoid" id="A8XV40"/>
<dbReference type="OMA" id="CSTYERV"/>
<dbReference type="Proteomes" id="UP000008549">
    <property type="component" value="Unassembled WGS sequence"/>
</dbReference>
<dbReference type="GO" id="GO:0005737">
    <property type="term" value="C:cytoplasm"/>
    <property type="evidence" value="ECO:0000250"/>
    <property type="project" value="UniProtKB"/>
</dbReference>
<dbReference type="GO" id="GO:0005874">
    <property type="term" value="C:microtubule"/>
    <property type="evidence" value="ECO:0007669"/>
    <property type="project" value="UniProtKB-KW"/>
</dbReference>
<dbReference type="GO" id="GO:0015630">
    <property type="term" value="C:microtubule cytoskeleton"/>
    <property type="evidence" value="ECO:0000318"/>
    <property type="project" value="GO_Central"/>
</dbReference>
<dbReference type="GO" id="GO:0048471">
    <property type="term" value="C:perinuclear region of cytoplasm"/>
    <property type="evidence" value="ECO:0000250"/>
    <property type="project" value="UniProtKB"/>
</dbReference>
<dbReference type="GO" id="GO:0005524">
    <property type="term" value="F:ATP binding"/>
    <property type="evidence" value="ECO:0007669"/>
    <property type="project" value="UniProtKB-KW"/>
</dbReference>
<dbReference type="GO" id="GO:0016887">
    <property type="term" value="F:ATP hydrolysis activity"/>
    <property type="evidence" value="ECO:0000318"/>
    <property type="project" value="GO_Central"/>
</dbReference>
<dbReference type="GO" id="GO:0008568">
    <property type="term" value="F:microtubule severing ATPase activity"/>
    <property type="evidence" value="ECO:0007669"/>
    <property type="project" value="UniProtKB-EC"/>
</dbReference>
<dbReference type="FunFam" id="1.10.8.60:FF:000022">
    <property type="entry name" value="Fidgetin like 1"/>
    <property type="match status" value="1"/>
</dbReference>
<dbReference type="FunFam" id="3.40.50.300:FF:000416">
    <property type="entry name" value="p-loop nucleoside triphosphate hydrolase superfamily protein"/>
    <property type="match status" value="1"/>
</dbReference>
<dbReference type="Gene3D" id="1.10.8.60">
    <property type="match status" value="1"/>
</dbReference>
<dbReference type="Gene3D" id="3.40.50.300">
    <property type="entry name" value="P-loop containing nucleotide triphosphate hydrolases"/>
    <property type="match status" value="1"/>
</dbReference>
<dbReference type="InterPro" id="IPR003593">
    <property type="entry name" value="AAA+_ATPase"/>
</dbReference>
<dbReference type="InterPro" id="IPR041569">
    <property type="entry name" value="AAA_lid_3"/>
</dbReference>
<dbReference type="InterPro" id="IPR003959">
    <property type="entry name" value="ATPase_AAA_core"/>
</dbReference>
<dbReference type="InterPro" id="IPR003960">
    <property type="entry name" value="ATPase_AAA_CS"/>
</dbReference>
<dbReference type="InterPro" id="IPR050304">
    <property type="entry name" value="MT-severing_AAA_ATPase"/>
</dbReference>
<dbReference type="InterPro" id="IPR027417">
    <property type="entry name" value="P-loop_NTPase"/>
</dbReference>
<dbReference type="PANTHER" id="PTHR23074">
    <property type="entry name" value="AAA DOMAIN-CONTAINING"/>
    <property type="match status" value="1"/>
</dbReference>
<dbReference type="PANTHER" id="PTHR23074:SF86">
    <property type="entry name" value="SPASTIN"/>
    <property type="match status" value="1"/>
</dbReference>
<dbReference type="Pfam" id="PF00004">
    <property type="entry name" value="AAA"/>
    <property type="match status" value="1"/>
</dbReference>
<dbReference type="Pfam" id="PF17862">
    <property type="entry name" value="AAA_lid_3"/>
    <property type="match status" value="1"/>
</dbReference>
<dbReference type="SMART" id="SM00382">
    <property type="entry name" value="AAA"/>
    <property type="match status" value="1"/>
</dbReference>
<dbReference type="SUPFAM" id="SSF52540">
    <property type="entry name" value="P-loop containing nucleoside triphosphate hydrolases"/>
    <property type="match status" value="1"/>
</dbReference>
<dbReference type="PROSITE" id="PS00674">
    <property type="entry name" value="AAA"/>
    <property type="match status" value="1"/>
</dbReference>
<evidence type="ECO:0000250" key="1"/>
<evidence type="ECO:0000255" key="2"/>
<evidence type="ECO:0000256" key="3">
    <source>
        <dbReference type="SAM" id="MobiDB-lite"/>
    </source>
</evidence>
<evidence type="ECO:0000305" key="4"/>
<reference key="1">
    <citation type="journal article" date="2003" name="PLoS Biol.">
        <title>The genome sequence of Caenorhabditis briggsae: a platform for comparative genomics.</title>
        <authorList>
            <person name="Stein L.D."/>
            <person name="Bao Z."/>
            <person name="Blasiar D."/>
            <person name="Blumenthal T."/>
            <person name="Brent M.R."/>
            <person name="Chen N."/>
            <person name="Chinwalla A."/>
            <person name="Clarke L."/>
            <person name="Clee C."/>
            <person name="Coghlan A."/>
            <person name="Coulson A."/>
            <person name="D'Eustachio P."/>
            <person name="Fitch D.H.A."/>
            <person name="Fulton L.A."/>
            <person name="Fulton R.E."/>
            <person name="Griffiths-Jones S."/>
            <person name="Harris T.W."/>
            <person name="Hillier L.W."/>
            <person name="Kamath R."/>
            <person name="Kuwabara P.E."/>
            <person name="Mardis E.R."/>
            <person name="Marra M.A."/>
            <person name="Miner T.L."/>
            <person name="Minx P."/>
            <person name="Mullikin J.C."/>
            <person name="Plumb R.W."/>
            <person name="Rogers J."/>
            <person name="Schein J.E."/>
            <person name="Sohrmann M."/>
            <person name="Spieth J."/>
            <person name="Stajich J.E."/>
            <person name="Wei C."/>
            <person name="Willey D."/>
            <person name="Wilson R.K."/>
            <person name="Durbin R.M."/>
            <person name="Waterston R.H."/>
        </authorList>
    </citation>
    <scope>NUCLEOTIDE SEQUENCE [LARGE SCALE GENOMIC DNA]</scope>
    <source>
        <strain>AF16</strain>
    </source>
</reference>
<feature type="chain" id="PRO_0000367131" description="Probable spastin homolog spas-1">
    <location>
        <begin position="1"/>
        <end position="542"/>
    </location>
</feature>
<feature type="region of interest" description="Disordered" evidence="3">
    <location>
        <begin position="131"/>
        <end position="177"/>
    </location>
</feature>
<feature type="coiled-coil region" evidence="2">
    <location>
        <begin position="29"/>
        <end position="66"/>
    </location>
</feature>
<feature type="compositionally biased region" description="Basic and acidic residues" evidence="3">
    <location>
        <begin position="135"/>
        <end position="169"/>
    </location>
</feature>
<feature type="binding site" evidence="2">
    <location>
        <begin position="309"/>
        <end position="316"/>
    </location>
    <ligand>
        <name>ATP</name>
        <dbReference type="ChEBI" id="CHEBI:30616"/>
    </ligand>
</feature>
<gene>
    <name type="primary">spas-1</name>
    <name type="ORF">CBG19220</name>
</gene>
<name>SPAST_CAEBR</name>